<sequence length="512" mass="58108">MVPTGQVAEKQACEEPRQDRELKSWRWLVFYLCFFGFMAQLRPGESFITPYLLERNFTKEQVTNEIIPMLPYSHLAVLVPIFLLTDYLRYKPVLVLQCLSFVCVWLLLLLGTSVVHMQLMEVFYSITMAARIAYSSYIFSLVQPSRYQRMASYSRAAVLLGVFISSVLGQVLVTLGGISTYMLNCISLGFILFSLSLSLFLKRPKRSLFFNRSALVQGALPCELDQMHPGPGRPEPRKLERMLGTCRDSFLVRMLSELVKNVRQPQLRLWCLWWVFNSAGYYLITYYVHVLWKITDSRLNYNGAVDAASTLLSAITAFTAGFVNIRWALWSKLVIASVIAIQAGLVFCMFQIPDIWVCYVTFVLFRGAYQFLVPIATFQIASSLSKELCALVFGINTFLATALKTSITLVVSDKRGLGLQVHQQFRIYFMYFLTLSIICLAWAGLDGLRYYRRGRHQPLAQAQALSPLEDSVQAISLQDGDLRRPQPSAPQLLPEDGSVEDGRADLRVEAKA</sequence>
<accession>Q62866</accession>
<accession>D3ZQS7</accession>
<accession>Q9QUM8</accession>
<protein>
    <recommendedName>
        <fullName evidence="10">Reduced folate transporter</fullName>
    </recommendedName>
    <alternativeName>
        <fullName evidence="8">Methotrexate carrier 1</fullName>
        <shortName evidence="8">MTX-1</shortName>
        <shortName evidence="8">MTX1</shortName>
    </alternativeName>
    <alternativeName>
        <fullName evidence="10">Plasma membrane folate antiporter SLC19A1</fullName>
    </alternativeName>
    <alternativeName>
        <fullName evidence="9">Reduced folate carrier 1</fullName>
        <shortName evidence="9">RFC-1</shortName>
        <shortName evidence="9">RFC1</shortName>
    </alternativeName>
    <alternativeName>
        <fullName evidence="10">Solute carrier family 19 member 1</fullName>
    </alternativeName>
</protein>
<reference key="1">
    <citation type="journal article" date="2000" name="Hepatology">
        <title>Cloning and functional characterization of the bile acid-sensitive methotrexate carrier from rat liver cells.</title>
        <authorList>
            <person name="Honscha W."/>
            <person name="Doetsch K.U."/>
            <person name="Thomsen N."/>
            <person name="Petzinger E."/>
        </authorList>
    </citation>
    <scope>NUCLEOTIDE SEQUENCE [MRNA]</scope>
    <scope>FUNCTION</scope>
    <scope>TISSUE SPECIFICITY</scope>
    <source>
        <strain>Sprague-Dawley</strain>
        <tissue>Kidney</tissue>
    </source>
</reference>
<reference key="2">
    <citation type="submission" date="1995-10" db="EMBL/GenBank/DDBJ databases">
        <title>Cloning and expression of a reduced folate carrier in rat vascular smooth muscle.</title>
        <authorList>
            <person name="Rubin S.A."/>
            <person name="Dyer D.L."/>
            <person name="Sharifi B.G."/>
            <person name="Said H.M."/>
        </authorList>
    </citation>
    <scope>NUCLEOTIDE SEQUENCE [MRNA]</scope>
    <source>
        <strain>Sprague-Dawley</strain>
        <tissue>Aorta</tissue>
    </source>
</reference>
<reference key="3">
    <citation type="journal article" date="2004" name="Nature">
        <title>Genome sequence of the Brown Norway rat yields insights into mammalian evolution.</title>
        <authorList>
            <person name="Gibbs R.A."/>
            <person name="Weinstock G.M."/>
            <person name="Metzker M.L."/>
            <person name="Muzny D.M."/>
            <person name="Sodergren E.J."/>
            <person name="Scherer S."/>
            <person name="Scott G."/>
            <person name="Steffen D."/>
            <person name="Worley K.C."/>
            <person name="Burch P.E."/>
            <person name="Okwuonu G."/>
            <person name="Hines S."/>
            <person name="Lewis L."/>
            <person name="Deramo C."/>
            <person name="Delgado O."/>
            <person name="Dugan-Rocha S."/>
            <person name="Miner G."/>
            <person name="Morgan M."/>
            <person name="Hawes A."/>
            <person name="Gill R."/>
            <person name="Holt R.A."/>
            <person name="Adams M.D."/>
            <person name="Amanatides P.G."/>
            <person name="Baden-Tillson H."/>
            <person name="Barnstead M."/>
            <person name="Chin S."/>
            <person name="Evans C.A."/>
            <person name="Ferriera S."/>
            <person name="Fosler C."/>
            <person name="Glodek A."/>
            <person name="Gu Z."/>
            <person name="Jennings D."/>
            <person name="Kraft C.L."/>
            <person name="Nguyen T."/>
            <person name="Pfannkoch C.M."/>
            <person name="Sitter C."/>
            <person name="Sutton G.G."/>
            <person name="Venter J.C."/>
            <person name="Woodage T."/>
            <person name="Smith D."/>
            <person name="Lee H.-M."/>
            <person name="Gustafson E."/>
            <person name="Cahill P."/>
            <person name="Kana A."/>
            <person name="Doucette-Stamm L."/>
            <person name="Weinstock K."/>
            <person name="Fechtel K."/>
            <person name="Weiss R.B."/>
            <person name="Dunn D.M."/>
            <person name="Green E.D."/>
            <person name="Blakesley R.W."/>
            <person name="Bouffard G.G."/>
            <person name="De Jong P.J."/>
            <person name="Osoegawa K."/>
            <person name="Zhu B."/>
            <person name="Marra M."/>
            <person name="Schein J."/>
            <person name="Bosdet I."/>
            <person name="Fjell C."/>
            <person name="Jones S."/>
            <person name="Krzywinski M."/>
            <person name="Mathewson C."/>
            <person name="Siddiqui A."/>
            <person name="Wye N."/>
            <person name="McPherson J."/>
            <person name="Zhao S."/>
            <person name="Fraser C.M."/>
            <person name="Shetty J."/>
            <person name="Shatsman S."/>
            <person name="Geer K."/>
            <person name="Chen Y."/>
            <person name="Abramzon S."/>
            <person name="Nierman W.C."/>
            <person name="Havlak P.H."/>
            <person name="Chen R."/>
            <person name="Durbin K.J."/>
            <person name="Egan A."/>
            <person name="Ren Y."/>
            <person name="Song X.-Z."/>
            <person name="Li B."/>
            <person name="Liu Y."/>
            <person name="Qin X."/>
            <person name="Cawley S."/>
            <person name="Cooney A.J."/>
            <person name="D'Souza L.M."/>
            <person name="Martin K."/>
            <person name="Wu J.Q."/>
            <person name="Gonzalez-Garay M.L."/>
            <person name="Jackson A.R."/>
            <person name="Kalafus K.J."/>
            <person name="McLeod M.P."/>
            <person name="Milosavljevic A."/>
            <person name="Virk D."/>
            <person name="Volkov A."/>
            <person name="Wheeler D.A."/>
            <person name="Zhang Z."/>
            <person name="Bailey J.A."/>
            <person name="Eichler E.E."/>
            <person name="Tuzun E."/>
            <person name="Birney E."/>
            <person name="Mongin E."/>
            <person name="Ureta-Vidal A."/>
            <person name="Woodwark C."/>
            <person name="Zdobnov E."/>
            <person name="Bork P."/>
            <person name="Suyama M."/>
            <person name="Torrents D."/>
            <person name="Alexandersson M."/>
            <person name="Trask B.J."/>
            <person name="Young J.M."/>
            <person name="Huang H."/>
            <person name="Wang H."/>
            <person name="Xing H."/>
            <person name="Daniels S."/>
            <person name="Gietzen D."/>
            <person name="Schmidt J."/>
            <person name="Stevens K."/>
            <person name="Vitt U."/>
            <person name="Wingrove J."/>
            <person name="Camara F."/>
            <person name="Mar Alba M."/>
            <person name="Abril J.F."/>
            <person name="Guigo R."/>
            <person name="Smit A."/>
            <person name="Dubchak I."/>
            <person name="Rubin E.M."/>
            <person name="Couronne O."/>
            <person name="Poliakov A."/>
            <person name="Huebner N."/>
            <person name="Ganten D."/>
            <person name="Goesele C."/>
            <person name="Hummel O."/>
            <person name="Kreitler T."/>
            <person name="Lee Y.-A."/>
            <person name="Monti J."/>
            <person name="Schulz H."/>
            <person name="Zimdahl H."/>
            <person name="Himmelbauer H."/>
            <person name="Lehrach H."/>
            <person name="Jacob H.J."/>
            <person name="Bromberg S."/>
            <person name="Gullings-Handley J."/>
            <person name="Jensen-Seaman M.I."/>
            <person name="Kwitek A.E."/>
            <person name="Lazar J."/>
            <person name="Pasko D."/>
            <person name="Tonellato P.J."/>
            <person name="Twigger S."/>
            <person name="Ponting C.P."/>
            <person name="Duarte J.M."/>
            <person name="Rice S."/>
            <person name="Goodstadt L."/>
            <person name="Beatson S.A."/>
            <person name="Emes R.D."/>
            <person name="Winter E.E."/>
            <person name="Webber C."/>
            <person name="Brandt P."/>
            <person name="Nyakatura G."/>
            <person name="Adetobi M."/>
            <person name="Chiaromonte F."/>
            <person name="Elnitski L."/>
            <person name="Eswara P."/>
            <person name="Hardison R.C."/>
            <person name="Hou M."/>
            <person name="Kolbe D."/>
            <person name="Makova K."/>
            <person name="Miller W."/>
            <person name="Nekrutenko A."/>
            <person name="Riemer C."/>
            <person name="Schwartz S."/>
            <person name="Taylor J."/>
            <person name="Yang S."/>
            <person name="Zhang Y."/>
            <person name="Lindpaintner K."/>
            <person name="Andrews T.D."/>
            <person name="Caccamo M."/>
            <person name="Clamp M."/>
            <person name="Clarke L."/>
            <person name="Curwen V."/>
            <person name="Durbin R.M."/>
            <person name="Eyras E."/>
            <person name="Searle S.M."/>
            <person name="Cooper G.M."/>
            <person name="Batzoglou S."/>
            <person name="Brudno M."/>
            <person name="Sidow A."/>
            <person name="Stone E.A."/>
            <person name="Payseur B.A."/>
            <person name="Bourque G."/>
            <person name="Lopez-Otin C."/>
            <person name="Puente X.S."/>
            <person name="Chakrabarti K."/>
            <person name="Chatterji S."/>
            <person name="Dewey C."/>
            <person name="Pachter L."/>
            <person name="Bray N."/>
            <person name="Yap V.B."/>
            <person name="Caspi A."/>
            <person name="Tesler G."/>
            <person name="Pevzner P.A."/>
            <person name="Haussler D."/>
            <person name="Roskin K.M."/>
            <person name="Baertsch R."/>
            <person name="Clawson H."/>
            <person name="Furey T.S."/>
            <person name="Hinrichs A.S."/>
            <person name="Karolchik D."/>
            <person name="Kent W.J."/>
            <person name="Rosenbloom K.R."/>
            <person name="Trumbower H."/>
            <person name="Weirauch M."/>
            <person name="Cooper D.N."/>
            <person name="Stenson P.D."/>
            <person name="Ma B."/>
            <person name="Brent M."/>
            <person name="Arumugam M."/>
            <person name="Shteynberg D."/>
            <person name="Copley R.R."/>
            <person name="Taylor M.S."/>
            <person name="Riethman H."/>
            <person name="Mudunuri U."/>
            <person name="Peterson J."/>
            <person name="Guyer M."/>
            <person name="Felsenfeld A."/>
            <person name="Old S."/>
            <person name="Mockrin S."/>
            <person name="Collins F.S."/>
        </authorList>
    </citation>
    <scope>NUCLEOTIDE SEQUENCE [LARGE SCALE GENOMIC DNA]</scope>
    <source>
        <strain>Brown Norway</strain>
    </source>
</reference>
<reference key="4">
    <citation type="submission" date="2005-07" db="EMBL/GenBank/DDBJ databases">
        <authorList>
            <person name="Mural R.J."/>
            <person name="Adams M.D."/>
            <person name="Myers E.W."/>
            <person name="Smith H.O."/>
            <person name="Venter J.C."/>
        </authorList>
    </citation>
    <scope>NUCLEOTIDE SEQUENCE [LARGE SCALE GENOMIC DNA]</scope>
</reference>
<reference key="5">
    <citation type="journal article" date="2004" name="Genome Res.">
        <title>The status, quality, and expansion of the NIH full-length cDNA project: the Mammalian Gene Collection (MGC).</title>
        <authorList>
            <consortium name="The MGC Project Team"/>
        </authorList>
    </citation>
    <scope>NUCLEOTIDE SEQUENCE [LARGE SCALE MRNA]</scope>
    <source>
        <tissue>Heart</tissue>
    </source>
</reference>
<reference key="6">
    <citation type="journal article" date="2001" name="Am. J. Physiol.">
        <title>Expression of the reduced folate carrier SLC19A1 in IEC-6 cells results in two distinct transport activities.</title>
        <authorList>
            <person name="Rajgopal A."/>
            <person name="Sierra E.E."/>
            <person name="Zhao R."/>
            <person name="Goldman I.D."/>
        </authorList>
    </citation>
    <scope>FUNCTION</scope>
</reference>
<reference key="7">
    <citation type="journal article" date="2009" name="IUBMB Life">
        <title>Low folate transport across intestinal basolateral surface is associated with down-regulation of reduced folate carrier in in vivo model of folate malabsorption.</title>
        <authorList>
            <person name="Hamid A."/>
            <person name="Kiran M."/>
            <person name="Rana S."/>
            <person name="Kaur J."/>
        </authorList>
    </citation>
    <scope>FUNCTION</scope>
    <scope>TRANSPORTER ACTIVITY</scope>
    <scope>BIOPHYSICOCHEMICAL PROPERTIES</scope>
    <scope>SUBCELLULAR LOCATION</scope>
</reference>
<organism>
    <name type="scientific">Rattus norvegicus</name>
    <name type="common">Rat</name>
    <dbReference type="NCBI Taxonomy" id="10116"/>
    <lineage>
        <taxon>Eukaryota</taxon>
        <taxon>Metazoa</taxon>
        <taxon>Chordata</taxon>
        <taxon>Craniata</taxon>
        <taxon>Vertebrata</taxon>
        <taxon>Euteleostomi</taxon>
        <taxon>Mammalia</taxon>
        <taxon>Eutheria</taxon>
        <taxon>Euarchontoglires</taxon>
        <taxon>Glires</taxon>
        <taxon>Rodentia</taxon>
        <taxon>Myomorpha</taxon>
        <taxon>Muroidea</taxon>
        <taxon>Muridae</taxon>
        <taxon>Murinae</taxon>
        <taxon>Rattus</taxon>
    </lineage>
</organism>
<comment type="function">
    <text evidence="1 2 5 6 7">Antiporter that mediates the import of reduced folates, driven by the export of organic anions (PubMed:11600421, PubMed:19243012). Also acts as an importer of immunoreactive cyclic dinucleotides, but with a lower transporter activity (By similarity). Mechanistically, acts as a secondary active transporter, which exports intracellular organic anions down their concentration gradients to facilitate the uptake of its substrates (By similarity). Has high affinity for N5-methyltetrahydrofolate, the predominant circulating form of folate (By similarity). Also mediates the import of antifolate drug methotrexate (PubMed:10827155, PubMed:11600421). 5-amino-4-imidazolecarboxamide riboside (AICAR), when phosphorylated to AICAR monophosphate, can serve as an organic anion for antiporter activity (By similarity).</text>
</comment>
<comment type="catalytic activity">
    <reaction evidence="7">
        <text>5-amino-1-(5-phospho-beta-D-ribosyl)imidazole-4-carboxamide(in) + (6S)-5-methyl-5,6,7,8-tetrahydrofolate(out) = 5-amino-1-(5-phospho-beta-D-ribosyl)imidazole-4-carboxamide(out) + (6S)-5-methyl-5,6,7,8-tetrahydrofolate(in)</text>
        <dbReference type="Rhea" id="RHEA:60460"/>
        <dbReference type="ChEBI" id="CHEBI:18608"/>
        <dbReference type="ChEBI" id="CHEBI:58475"/>
    </reaction>
    <physiologicalReaction direction="left-to-right" evidence="7">
        <dbReference type="Rhea" id="RHEA:60461"/>
    </physiologicalReaction>
</comment>
<comment type="biophysicochemical properties">
    <kinetics>
        <KM evidence="7">1.42 uM for folate</KM>
    </kinetics>
</comment>
<comment type="subcellular location">
    <subcellularLocation>
        <location evidence="7">Cell membrane</location>
        <topology evidence="2">Multi-pass membrane protein</topology>
    </subcellularLocation>
    <subcellularLocation>
        <location evidence="2">Apical cell membrane</location>
        <topology evidence="2">Multi-pass membrane protein</topology>
    </subcellularLocation>
    <subcellularLocation>
        <location evidence="7">Basolateral cell membrane</location>
        <topology evidence="2">Multi-pass membrane protein</topology>
    </subcellularLocation>
</comment>
<comment type="tissue specificity">
    <text evidence="5">Expressed in liver, heart, brain, spleen, lung and skeletal muscle.</text>
</comment>
<comment type="similarity">
    <text evidence="10">Belongs to the reduced folate carrier (RFC) transporter (TC 2.A.48) family.</text>
</comment>
<dbReference type="EMBL" id="AF173642">
    <property type="protein sequence ID" value="AAD49426.1"/>
    <property type="molecule type" value="mRNA"/>
</dbReference>
<dbReference type="EMBL" id="AF099009">
    <property type="protein sequence ID" value="AAF21822.1"/>
    <property type="molecule type" value="mRNA"/>
</dbReference>
<dbReference type="EMBL" id="U38180">
    <property type="protein sequence ID" value="AAC61788.1"/>
    <property type="molecule type" value="mRNA"/>
</dbReference>
<dbReference type="EMBL" id="BC085742">
    <property type="protein sequence ID" value="AAH85742.1"/>
    <property type="molecule type" value="mRNA"/>
</dbReference>
<dbReference type="EMBL" id="CH473988">
    <property type="protein sequence ID" value="EDL97120.1"/>
    <property type="molecule type" value="Genomic_DNA"/>
</dbReference>
<dbReference type="EMBL" id="AABR07044596">
    <property type="status" value="NOT_ANNOTATED_CDS"/>
    <property type="molecule type" value="Genomic_DNA"/>
</dbReference>
<dbReference type="EMBL" id="CH473988">
    <property type="protein sequence ID" value="EDL97117.1"/>
    <property type="molecule type" value="Genomic_DNA"/>
</dbReference>
<dbReference type="EMBL" id="CH473988">
    <property type="protein sequence ID" value="EDL97118.1"/>
    <property type="molecule type" value="Genomic_DNA"/>
</dbReference>
<dbReference type="EMBL" id="CH473988">
    <property type="protein sequence ID" value="EDL97119.1"/>
    <property type="molecule type" value="Genomic_DNA"/>
</dbReference>
<dbReference type="RefSeq" id="NP_001030309.1">
    <property type="nucleotide sequence ID" value="NM_001035232.1"/>
</dbReference>
<dbReference type="RefSeq" id="NP_058995.2">
    <property type="nucleotide sequence ID" value="NM_017299.2"/>
</dbReference>
<dbReference type="RefSeq" id="XP_006256357.1">
    <property type="nucleotide sequence ID" value="XM_006256295.3"/>
</dbReference>
<dbReference type="RefSeq" id="XP_006256358.1">
    <property type="nucleotide sequence ID" value="XM_006256296.3"/>
</dbReference>
<dbReference type="RefSeq" id="XP_006256359.1">
    <property type="nucleotide sequence ID" value="XM_006256297.3"/>
</dbReference>
<dbReference type="RefSeq" id="XP_006256360.1">
    <property type="nucleotide sequence ID" value="XM_006256298.2"/>
</dbReference>
<dbReference type="RefSeq" id="XP_038954558.1">
    <property type="nucleotide sequence ID" value="XM_039098630.2"/>
</dbReference>
<dbReference type="RefSeq" id="XP_038954559.1">
    <property type="nucleotide sequence ID" value="XM_039098631.2"/>
</dbReference>
<dbReference type="RefSeq" id="XP_038954560.1">
    <property type="nucleotide sequence ID" value="XM_039098632.2"/>
</dbReference>
<dbReference type="RefSeq" id="XP_038954561.1">
    <property type="nucleotide sequence ID" value="XM_039098633.2"/>
</dbReference>
<dbReference type="SMR" id="Q62866"/>
<dbReference type="FunCoup" id="Q62866">
    <property type="interactions" value="344"/>
</dbReference>
<dbReference type="STRING" id="10116.ENSRNOP00000060579"/>
<dbReference type="GlyCosmos" id="Q62866">
    <property type="glycosylation" value="1 site, No reported glycans"/>
</dbReference>
<dbReference type="GlyGen" id="Q62866">
    <property type="glycosylation" value="1 site"/>
</dbReference>
<dbReference type="PhosphoSitePlus" id="Q62866"/>
<dbReference type="PaxDb" id="10116-ENSRNOP00000041562"/>
<dbReference type="Ensembl" id="ENSRNOT00000065236.4">
    <property type="protein sequence ID" value="ENSRNOP00000060579.3"/>
    <property type="gene ID" value="ENSRNOG00000001232.8"/>
</dbReference>
<dbReference type="GeneID" id="29723"/>
<dbReference type="KEGG" id="rno:29723"/>
<dbReference type="UCSC" id="RGD:3695">
    <property type="organism name" value="rat"/>
</dbReference>
<dbReference type="AGR" id="RGD:3695"/>
<dbReference type="CTD" id="6573"/>
<dbReference type="RGD" id="3695">
    <property type="gene designation" value="Slc19a1"/>
</dbReference>
<dbReference type="eggNOG" id="KOG3810">
    <property type="taxonomic scope" value="Eukaryota"/>
</dbReference>
<dbReference type="GeneTree" id="ENSGT00950000183022"/>
<dbReference type="HOGENOM" id="CLU_036909_2_0_1"/>
<dbReference type="InParanoid" id="Q62866"/>
<dbReference type="OMA" id="MQFMELF"/>
<dbReference type="OrthoDB" id="18814at2759"/>
<dbReference type="PhylomeDB" id="Q62866"/>
<dbReference type="Reactome" id="R-RNO-196757">
    <property type="pathway name" value="Metabolism of folate and pterines"/>
</dbReference>
<dbReference type="PRO" id="PR:Q62866"/>
<dbReference type="Proteomes" id="UP000002494">
    <property type="component" value="Chromosome 20"/>
</dbReference>
<dbReference type="Proteomes" id="UP000234681">
    <property type="component" value="Chromosome 20"/>
</dbReference>
<dbReference type="Bgee" id="ENSRNOG00000001232">
    <property type="expression patterns" value="Expressed in adult mammalian kidney and 18 other cell types or tissues"/>
</dbReference>
<dbReference type="GO" id="GO:0016324">
    <property type="term" value="C:apical plasma membrane"/>
    <property type="evidence" value="ECO:0000314"/>
    <property type="project" value="ARUK-UCL"/>
</dbReference>
<dbReference type="GO" id="GO:0016323">
    <property type="term" value="C:basolateral plasma membrane"/>
    <property type="evidence" value="ECO:0000314"/>
    <property type="project" value="ARUK-UCL"/>
</dbReference>
<dbReference type="GO" id="GO:0031526">
    <property type="term" value="C:brush border membrane"/>
    <property type="evidence" value="ECO:0000314"/>
    <property type="project" value="RGD"/>
</dbReference>
<dbReference type="GO" id="GO:0005886">
    <property type="term" value="C:plasma membrane"/>
    <property type="evidence" value="ECO:0000266"/>
    <property type="project" value="RGD"/>
</dbReference>
<dbReference type="GO" id="GO:0061507">
    <property type="term" value="F:2',3'-cyclic GMP-AMP binding"/>
    <property type="evidence" value="ECO:0000266"/>
    <property type="project" value="RGD"/>
</dbReference>
<dbReference type="GO" id="GO:0015297">
    <property type="term" value="F:antiporter activity"/>
    <property type="evidence" value="ECO:0000266"/>
    <property type="project" value="RGD"/>
</dbReference>
<dbReference type="GO" id="GO:0140360">
    <property type="term" value="F:cyclic-GMP-AMP transmembrane transporter activity"/>
    <property type="evidence" value="ECO:0000266"/>
    <property type="project" value="RGD"/>
</dbReference>
<dbReference type="GO" id="GO:0008518">
    <property type="term" value="F:folate:monoatomic anion antiporter activity"/>
    <property type="evidence" value="ECO:0000314"/>
    <property type="project" value="RGD"/>
</dbReference>
<dbReference type="GO" id="GO:0005542">
    <property type="term" value="F:folic acid binding"/>
    <property type="evidence" value="ECO:0000314"/>
    <property type="project" value="RGD"/>
</dbReference>
<dbReference type="GO" id="GO:0008517">
    <property type="term" value="F:folic acid transmembrane transporter activity"/>
    <property type="evidence" value="ECO:0000266"/>
    <property type="project" value="RGD"/>
</dbReference>
<dbReference type="GO" id="GO:0015350">
    <property type="term" value="F:methotrexate transmembrane transporter activity"/>
    <property type="evidence" value="ECO:0000314"/>
    <property type="project" value="UniProtKB"/>
</dbReference>
<dbReference type="GO" id="GO:0008514">
    <property type="term" value="F:organic anion transmembrane transporter activity"/>
    <property type="evidence" value="ECO:0000315"/>
    <property type="project" value="ARUK-UCL"/>
</dbReference>
<dbReference type="GO" id="GO:0042910">
    <property type="term" value="F:xenobiotic transmembrane transporter activity"/>
    <property type="evidence" value="ECO:0000315"/>
    <property type="project" value="ARUK-UCL"/>
</dbReference>
<dbReference type="GO" id="GO:0140361">
    <property type="term" value="P:cyclic-GMP-AMP transmembrane import across plasma membrane"/>
    <property type="evidence" value="ECO:0000266"/>
    <property type="project" value="RGD"/>
</dbReference>
<dbReference type="GO" id="GO:0007565">
    <property type="term" value="P:female pregnancy"/>
    <property type="evidence" value="ECO:0000270"/>
    <property type="project" value="RGD"/>
</dbReference>
<dbReference type="GO" id="GO:1904447">
    <property type="term" value="P:folate import across plasma membrane"/>
    <property type="evidence" value="ECO:0000266"/>
    <property type="project" value="RGD"/>
</dbReference>
<dbReference type="GO" id="GO:0098838">
    <property type="term" value="P:folate transmembrane transport"/>
    <property type="evidence" value="ECO:0000266"/>
    <property type="project" value="RGD"/>
</dbReference>
<dbReference type="GO" id="GO:0015884">
    <property type="term" value="P:folic acid transport"/>
    <property type="evidence" value="ECO:0000266"/>
    <property type="project" value="RGD"/>
</dbReference>
<dbReference type="GO" id="GO:0051958">
    <property type="term" value="P:methotrexate transport"/>
    <property type="evidence" value="ECO:0000314"/>
    <property type="project" value="UniProtKB"/>
</dbReference>
<dbReference type="GO" id="GO:0015711">
    <property type="term" value="P:organic anion transport"/>
    <property type="evidence" value="ECO:0000315"/>
    <property type="project" value="ARUK-UCL"/>
</dbReference>
<dbReference type="GO" id="GO:0141111">
    <property type="term" value="P:positive regulation of cGAS/STING signaling pathway"/>
    <property type="evidence" value="ECO:0000266"/>
    <property type="project" value="RGD"/>
</dbReference>
<dbReference type="GO" id="GO:0009636">
    <property type="term" value="P:response to toxic substance"/>
    <property type="evidence" value="ECO:0000270"/>
    <property type="project" value="RGD"/>
</dbReference>
<dbReference type="GO" id="GO:0009410">
    <property type="term" value="P:response to xenobiotic stimulus"/>
    <property type="evidence" value="ECO:0000270"/>
    <property type="project" value="RGD"/>
</dbReference>
<dbReference type="GO" id="GO:0006855">
    <property type="term" value="P:xenobiotic transmembrane transport"/>
    <property type="evidence" value="ECO:0000315"/>
    <property type="project" value="ARUK-UCL"/>
</dbReference>
<dbReference type="FunFam" id="1.20.1250.20:FF:000225">
    <property type="entry name" value="Solute carrier family 19 member 1"/>
    <property type="match status" value="1"/>
</dbReference>
<dbReference type="Gene3D" id="1.20.1250.20">
    <property type="entry name" value="MFS general substrate transporter like domains"/>
    <property type="match status" value="1"/>
</dbReference>
<dbReference type="InterPro" id="IPR002666">
    <property type="entry name" value="Folate_carrier"/>
</dbReference>
<dbReference type="InterPro" id="IPR036259">
    <property type="entry name" value="MFS_trans_sf"/>
</dbReference>
<dbReference type="InterPro" id="IPR028339">
    <property type="entry name" value="SLC19A1"/>
</dbReference>
<dbReference type="NCBIfam" id="TIGR00806">
    <property type="entry name" value="rfc"/>
    <property type="match status" value="1"/>
</dbReference>
<dbReference type="PANTHER" id="PTHR10686">
    <property type="entry name" value="FOLATE TRANSPORTER"/>
    <property type="match status" value="1"/>
</dbReference>
<dbReference type="PANTHER" id="PTHR10686:SF12">
    <property type="entry name" value="REDUCED FOLATE TRANSPORTER"/>
    <property type="match status" value="1"/>
</dbReference>
<dbReference type="Pfam" id="PF01770">
    <property type="entry name" value="Folate_carrier"/>
    <property type="match status" value="1"/>
</dbReference>
<dbReference type="PIRSF" id="PIRSF028739">
    <property type="entry name" value="Folate_carrier"/>
    <property type="match status" value="1"/>
</dbReference>
<dbReference type="PIRSF" id="PIRSF500793">
    <property type="entry name" value="Folate_transporter_1"/>
    <property type="match status" value="1"/>
</dbReference>
<dbReference type="SUPFAM" id="SSF103473">
    <property type="entry name" value="MFS general substrate transporter"/>
    <property type="match status" value="1"/>
</dbReference>
<gene>
    <name evidence="11" type="primary">Slc19a1</name>
</gene>
<feature type="chain" id="PRO_0000178662" description="Reduced folate transporter">
    <location>
        <begin position="1"/>
        <end position="512"/>
    </location>
</feature>
<feature type="topological domain" description="Cytoplasmic" evidence="2">
    <location>
        <begin position="1"/>
        <end position="29"/>
    </location>
</feature>
<feature type="transmembrane region" description="Helical; Name=1" evidence="2">
    <location>
        <begin position="30"/>
        <end position="50"/>
    </location>
</feature>
<feature type="topological domain" description="Extracellular" evidence="2">
    <location>
        <begin position="51"/>
        <end position="62"/>
    </location>
</feature>
<feature type="transmembrane region" description="Helical; Name=2" evidence="2">
    <location>
        <begin position="63"/>
        <end position="85"/>
    </location>
</feature>
<feature type="topological domain" description="Cytoplasmic" evidence="2">
    <location>
        <begin position="86"/>
        <end position="89"/>
    </location>
</feature>
<feature type="transmembrane region" description="Helical; Name=3" evidence="2">
    <location>
        <begin position="90"/>
        <end position="110"/>
    </location>
</feature>
<feature type="topological domain" description="Extracellular" evidence="2">
    <location>
        <begin position="111"/>
        <end position="114"/>
    </location>
</feature>
<feature type="transmembrane region" description="Helical; Name=4" evidence="2">
    <location>
        <begin position="115"/>
        <end position="137"/>
    </location>
</feature>
<feature type="topological domain" description="Cytoplasmic" evidence="2">
    <location>
        <begin position="138"/>
        <end position="151"/>
    </location>
</feature>
<feature type="transmembrane region" description="Helical; Name=5" evidence="2">
    <location>
        <begin position="152"/>
        <end position="176"/>
    </location>
</feature>
<feature type="topological domain" description="Extracellular" evidence="2">
    <location>
        <begin position="177"/>
        <end position="181"/>
    </location>
</feature>
<feature type="transmembrane region" description="Helical; Name=6" evidence="2">
    <location>
        <begin position="182"/>
        <end position="200"/>
    </location>
</feature>
<feature type="topological domain" description="Cytoplasmic" evidence="2">
    <location>
        <begin position="201"/>
        <end position="266"/>
    </location>
</feature>
<feature type="transmembrane region" description="Helical; Name=7" evidence="2">
    <location>
        <begin position="267"/>
        <end position="292"/>
    </location>
</feature>
<feature type="topological domain" description="Extracellular" evidence="2">
    <location>
        <begin position="293"/>
        <end position="300"/>
    </location>
</feature>
<feature type="transmembrane region" description="Helical; Name=8" evidence="2">
    <location>
        <begin position="301"/>
        <end position="323"/>
    </location>
</feature>
<feature type="topological domain" description="Cytoplasmic" evidence="2">
    <location>
        <begin position="324"/>
        <end position="329"/>
    </location>
</feature>
<feature type="transmembrane region" description="Helical; Name=9" evidence="2">
    <location>
        <begin position="330"/>
        <end position="350"/>
    </location>
</feature>
<feature type="topological domain" description="Extracellular" evidence="2">
    <location>
        <begin position="351"/>
        <end position="353"/>
    </location>
</feature>
<feature type="transmembrane region" description="Helical; Name=10" evidence="2">
    <location>
        <begin position="354"/>
        <end position="377"/>
    </location>
</feature>
<feature type="topological domain" description="Cytoplasmic" evidence="2">
    <location>
        <begin position="378"/>
        <end position="391"/>
    </location>
</feature>
<feature type="transmembrane region" description="Helical; Name=11" evidence="2">
    <location>
        <begin position="392"/>
        <end position="415"/>
    </location>
</feature>
<feature type="topological domain" description="Extracellular" evidence="2">
    <location>
        <begin position="416"/>
        <end position="423"/>
    </location>
</feature>
<feature type="transmembrane region" description="Helical; Name=12" evidence="2">
    <location>
        <begin position="424"/>
        <end position="448"/>
    </location>
</feature>
<feature type="topological domain" description="Cytoplasmic" evidence="2">
    <location>
        <begin position="449"/>
        <end position="512"/>
    </location>
</feature>
<feature type="region of interest" description="Required for substrate-binding" evidence="2">
    <location>
        <begin position="400"/>
        <end position="412"/>
    </location>
</feature>
<feature type="region of interest" description="Disordered" evidence="4">
    <location>
        <begin position="479"/>
        <end position="512"/>
    </location>
</feature>
<feature type="compositionally biased region" description="Basic and acidic residues" evidence="4">
    <location>
        <begin position="500"/>
        <end position="512"/>
    </location>
</feature>
<feature type="binding site" evidence="2">
    <location>
        <position position="48"/>
    </location>
    <ligand>
        <name>folate</name>
        <dbReference type="ChEBI" id="CHEBI:62501"/>
    </ligand>
</feature>
<feature type="binding site" evidence="2">
    <location>
        <position position="49"/>
    </location>
    <ligand>
        <name>folate</name>
        <dbReference type="ChEBI" id="CHEBI:62501"/>
    </ligand>
</feature>
<feature type="binding site" evidence="2">
    <location>
        <position position="121"/>
    </location>
    <ligand>
        <name>folate</name>
        <dbReference type="ChEBI" id="CHEBI:62501"/>
    </ligand>
</feature>
<feature type="binding site" evidence="2">
    <location>
        <position position="131"/>
    </location>
    <ligand>
        <name>folate</name>
        <dbReference type="ChEBI" id="CHEBI:62501"/>
    </ligand>
</feature>
<feature type="binding site" evidence="2">
    <location>
        <position position="162"/>
    </location>
    <ligand>
        <name>folate</name>
        <dbReference type="ChEBI" id="CHEBI:62501"/>
    </ligand>
</feature>
<feature type="binding site" evidence="2">
    <location>
        <position position="281"/>
    </location>
    <ligand>
        <name>folate</name>
        <dbReference type="ChEBI" id="CHEBI:62501"/>
    </ligand>
</feature>
<feature type="binding site" evidence="2">
    <location>
        <position position="282"/>
    </location>
    <ligand>
        <name>folate</name>
        <dbReference type="ChEBI" id="CHEBI:62501"/>
    </ligand>
</feature>
<feature type="binding site" evidence="2">
    <location>
        <position position="286"/>
    </location>
    <ligand>
        <name>folate</name>
        <dbReference type="ChEBI" id="CHEBI:62501"/>
    </ligand>
</feature>
<feature type="binding site" evidence="2">
    <location>
        <position position="366"/>
    </location>
    <ligand>
        <name>folate</name>
        <dbReference type="ChEBI" id="CHEBI:62501"/>
    </ligand>
</feature>
<feature type="binding site" evidence="2">
    <location>
        <position position="370"/>
    </location>
    <ligand>
        <name>folate</name>
        <dbReference type="ChEBI" id="CHEBI:62501"/>
    </ligand>
</feature>
<feature type="modified residue" description="N-acetylmethionine" evidence="2">
    <location>
        <position position="1"/>
    </location>
</feature>
<feature type="modified residue" description="Phosphoserine" evidence="1">
    <location>
        <position position="466"/>
    </location>
</feature>
<feature type="modified residue" description="Phosphoserine" evidence="1">
    <location>
        <position position="471"/>
    </location>
</feature>
<feature type="modified residue" description="Phosphoserine" evidence="1">
    <location>
        <position position="476"/>
    </location>
</feature>
<feature type="glycosylation site" description="N-linked (GlcNAc...) asparagine" evidence="3">
    <location>
        <position position="56"/>
    </location>
</feature>
<feature type="sequence conflict" description="In Ref. 2; AAC61788." evidence="10" ref="2">
    <original>A</original>
    <variation>G</variation>
    <location>
        <position position="8"/>
    </location>
</feature>
<evidence type="ECO:0000250" key="1">
    <source>
        <dbReference type="UniProtKB" id="P41438"/>
    </source>
</evidence>
<evidence type="ECO:0000250" key="2">
    <source>
        <dbReference type="UniProtKB" id="P41440"/>
    </source>
</evidence>
<evidence type="ECO:0000255" key="3"/>
<evidence type="ECO:0000256" key="4">
    <source>
        <dbReference type="SAM" id="MobiDB-lite"/>
    </source>
</evidence>
<evidence type="ECO:0000269" key="5">
    <source>
    </source>
</evidence>
<evidence type="ECO:0000269" key="6">
    <source>
    </source>
</evidence>
<evidence type="ECO:0000269" key="7">
    <source>
    </source>
</evidence>
<evidence type="ECO:0000303" key="8">
    <source>
    </source>
</evidence>
<evidence type="ECO:0000303" key="9">
    <source ref="2"/>
</evidence>
<evidence type="ECO:0000305" key="10"/>
<evidence type="ECO:0000312" key="11">
    <source>
        <dbReference type="RGD" id="3695"/>
    </source>
</evidence>
<keyword id="KW-0007">Acetylation</keyword>
<keyword id="KW-0050">Antiport</keyword>
<keyword id="KW-1003">Cell membrane</keyword>
<keyword id="KW-0290">Folate-binding</keyword>
<keyword id="KW-0325">Glycoprotein</keyword>
<keyword id="KW-0472">Membrane</keyword>
<keyword id="KW-0597">Phosphoprotein</keyword>
<keyword id="KW-1185">Reference proteome</keyword>
<keyword id="KW-0812">Transmembrane</keyword>
<keyword id="KW-1133">Transmembrane helix</keyword>
<keyword id="KW-0813">Transport</keyword>
<name>S19A1_RAT</name>
<proteinExistence type="evidence at protein level"/>